<keyword id="KW-0903">Direct protein sequencing</keyword>
<keyword id="KW-1185">Reference proteome</keyword>
<protein>
    <recommendedName>
        <fullName>Zinc finger protein CONSTANS-like protein</fullName>
    </recommendedName>
</protein>
<feature type="chain" id="PRO_0000305615" description="Zinc finger protein CONSTANS-like protein">
    <location>
        <begin position="1" status="less than"/>
        <end position="14" status="greater than"/>
    </location>
</feature>
<feature type="non-terminal residue" evidence="2">
    <location>
        <position position="1"/>
    </location>
</feature>
<feature type="non-terminal residue" evidence="2">
    <location>
        <position position="14"/>
    </location>
</feature>
<evidence type="ECO:0000269" key="1">
    <source ref="1"/>
</evidence>
<evidence type="ECO:0000303" key="2">
    <source ref="1"/>
</evidence>
<evidence type="ECO:0000305" key="3"/>
<sequence length="14" mass="1463">VKMELDGGVASNSR</sequence>
<comment type="similarity">
    <text evidence="3">Belongs to the CONSTANS family.</text>
</comment>
<accession>P84975</accession>
<reference evidence="3" key="1">
    <citation type="thesis" date="2006" institute="ICAT-FCUL" country="Portugal">
        <title>Molecular analysis of Populus euphratica Oliv. response to moderate heat stress.</title>
        <authorList>
            <person name="Ferreira S."/>
        </authorList>
    </citation>
    <scope>PROTEIN SEQUENCE</scope>
    <source>
        <tissue evidence="1">Leaf</tissue>
    </source>
</reference>
<dbReference type="Proteomes" id="UP000694918">
    <property type="component" value="Unplaced"/>
</dbReference>
<name>ZFCOL_POPEU</name>
<proteinExistence type="evidence at protein level"/>
<organism>
    <name type="scientific">Populus euphratica</name>
    <name type="common">Euphrates poplar</name>
    <dbReference type="NCBI Taxonomy" id="75702"/>
    <lineage>
        <taxon>Eukaryota</taxon>
        <taxon>Viridiplantae</taxon>
        <taxon>Streptophyta</taxon>
        <taxon>Embryophyta</taxon>
        <taxon>Tracheophyta</taxon>
        <taxon>Spermatophyta</taxon>
        <taxon>Magnoliopsida</taxon>
        <taxon>eudicotyledons</taxon>
        <taxon>Gunneridae</taxon>
        <taxon>Pentapetalae</taxon>
        <taxon>rosids</taxon>
        <taxon>fabids</taxon>
        <taxon>Malpighiales</taxon>
        <taxon>Salicaceae</taxon>
        <taxon>Saliceae</taxon>
        <taxon>Populus</taxon>
    </lineage>
</organism>